<keyword id="KW-0131">Cell cycle</keyword>
<keyword id="KW-0132">Cell division</keyword>
<keyword id="KW-0137">Centromere</keyword>
<keyword id="KW-0158">Chromosome</keyword>
<keyword id="KW-0159">Chromosome partition</keyword>
<keyword id="KW-0963">Cytoplasm</keyword>
<keyword id="KW-0206">Cytoskeleton</keyword>
<keyword id="KW-0238">DNA-binding</keyword>
<keyword id="KW-0995">Kinetochore</keyword>
<keyword id="KW-0479">Metal-binding</keyword>
<keyword id="KW-0493">Microtubule</keyword>
<keyword id="KW-0498">Mitosis</keyword>
<keyword id="KW-0539">Nucleus</keyword>
<keyword id="KW-1185">Reference proteome</keyword>
<keyword id="KW-0677">Repeat</keyword>
<keyword id="KW-0862">Zinc</keyword>
<keyword id="KW-0863">Zinc-finger</keyword>
<sequence>MGRKKKKQLKPWCWYCNRDFDDEKILTQHQKAKHFKCHICHKKLYTGPGLAIHCMQVHKETIDAVPNAIPGRTDIELEIYGMEGIPEKDMDEGRRLLEQKTQESQKKKQQDDSDEYDDDDSAASTSFQPQPVQPQQGYIPPMAQPGLPPVPGAPGMPPGIPPLMPGVPPLMPGMPPVMPGMPPGLHHQRKYTQSFCGENIMMPMGGMMPPGPGIPPLMPGMPPGMPPPVPRPGIPPMTQAQAVSAPGILNRPPAPTATVPAPQPPVTKPLFPSAGQMGTPVTSSSTASSNSESLSASSKAPFPSTAQAQVAVQGPVGTDFKPLNSTPATSTEPPKPTFPAYTQSTASTTSTTNSTAAKPAASITSKPATLTTTSATSKLIHPDEDISLEERRAQLPKYQRNLPRPGQAPIGNPPVGPIGGMMPPQPGIPQQQGMRPPMPPHGQYGGHHQGMPGYLPGAMPPYGQGPPMVPPYQGGPPRPPMGMRPPVMSQGGRY</sequence>
<feature type="chain" id="PRO_0000301676" description="BUB3-interacting and GLEBS motif-containing protein ZNF207">
    <location>
        <begin position="1"/>
        <end position="494"/>
    </location>
</feature>
<feature type="zinc finger region" description="C2H2-type 1">
    <location>
        <begin position="11"/>
        <end position="34"/>
    </location>
</feature>
<feature type="zinc finger region" description="C2H2-type 2">
    <location>
        <begin position="35"/>
        <end position="58"/>
    </location>
</feature>
<feature type="region of interest" description="Microtubule-binding region" evidence="1">
    <location>
        <begin position="1"/>
        <end position="92"/>
    </location>
</feature>
<feature type="region of interest" description="Disordered" evidence="3">
    <location>
        <begin position="100"/>
        <end position="161"/>
    </location>
</feature>
<feature type="region of interest" description="Disordered" evidence="3">
    <location>
        <begin position="250"/>
        <end position="377"/>
    </location>
</feature>
<feature type="region of interest" description="GLEBS" evidence="1">
    <location>
        <begin position="375"/>
        <end position="407"/>
    </location>
</feature>
<feature type="region of interest" description="Disordered" evidence="3">
    <location>
        <begin position="455"/>
        <end position="494"/>
    </location>
</feature>
<feature type="compositionally biased region" description="Basic and acidic residues" evidence="3">
    <location>
        <begin position="100"/>
        <end position="111"/>
    </location>
</feature>
<feature type="compositionally biased region" description="Acidic residues" evidence="3">
    <location>
        <begin position="112"/>
        <end position="121"/>
    </location>
</feature>
<feature type="compositionally biased region" description="Polar residues" evidence="3">
    <location>
        <begin position="127"/>
        <end position="136"/>
    </location>
</feature>
<feature type="compositionally biased region" description="Pro residues" evidence="3">
    <location>
        <begin position="142"/>
        <end position="161"/>
    </location>
</feature>
<feature type="compositionally biased region" description="Low complexity" evidence="3">
    <location>
        <begin position="283"/>
        <end position="300"/>
    </location>
</feature>
<feature type="compositionally biased region" description="Polar residues" evidence="3">
    <location>
        <begin position="323"/>
        <end position="332"/>
    </location>
</feature>
<feature type="compositionally biased region" description="Low complexity" evidence="3">
    <location>
        <begin position="342"/>
        <end position="377"/>
    </location>
</feature>
<feature type="compositionally biased region" description="Pro residues" evidence="3">
    <location>
        <begin position="463"/>
        <end position="483"/>
    </location>
</feature>
<name>ZN207_PONAB</name>
<gene>
    <name evidence="1" type="primary">ZNF207</name>
    <name evidence="1" type="synonym">BUGZ</name>
</gene>
<organism>
    <name type="scientific">Pongo abelii</name>
    <name type="common">Sumatran orangutan</name>
    <name type="synonym">Pongo pygmaeus abelii</name>
    <dbReference type="NCBI Taxonomy" id="9601"/>
    <lineage>
        <taxon>Eukaryota</taxon>
        <taxon>Metazoa</taxon>
        <taxon>Chordata</taxon>
        <taxon>Craniata</taxon>
        <taxon>Vertebrata</taxon>
        <taxon>Euteleostomi</taxon>
        <taxon>Mammalia</taxon>
        <taxon>Eutheria</taxon>
        <taxon>Euarchontoglires</taxon>
        <taxon>Primates</taxon>
        <taxon>Haplorrhini</taxon>
        <taxon>Catarrhini</taxon>
        <taxon>Hominidae</taxon>
        <taxon>Pongo</taxon>
    </lineage>
</organism>
<reference key="1">
    <citation type="submission" date="2004-11" db="EMBL/GenBank/DDBJ databases">
        <authorList>
            <consortium name="The German cDNA consortium"/>
        </authorList>
    </citation>
    <scope>NUCLEOTIDE SEQUENCE [LARGE SCALE MRNA]</scope>
    <source>
        <tissue>Kidney</tissue>
    </source>
</reference>
<protein>
    <recommendedName>
        <fullName evidence="1">BUB3-interacting and GLEBS motif-containing protein ZNF207</fullName>
        <shortName evidence="1">BuGZ</shortName>
    </recommendedName>
    <alternativeName>
        <fullName evidence="1">Zinc finger protein 207</fullName>
    </alternativeName>
</protein>
<dbReference type="EMBL" id="CR859748">
    <property type="protein sequence ID" value="CAH91906.1"/>
    <property type="molecule type" value="mRNA"/>
</dbReference>
<dbReference type="RefSeq" id="NP_001126104.1">
    <property type="nucleotide sequence ID" value="NM_001132632.1"/>
</dbReference>
<dbReference type="SMR" id="Q5R8K4"/>
<dbReference type="FunCoup" id="Q5R8K4">
    <property type="interactions" value="3139"/>
</dbReference>
<dbReference type="STRING" id="9601.ENSPPYP00000009173"/>
<dbReference type="GeneID" id="100189649"/>
<dbReference type="CTD" id="7756"/>
<dbReference type="eggNOG" id="KOG2893">
    <property type="taxonomic scope" value="Eukaryota"/>
</dbReference>
<dbReference type="InParanoid" id="Q5R8K4"/>
<dbReference type="Proteomes" id="UP000001595">
    <property type="component" value="Unplaced"/>
</dbReference>
<dbReference type="GO" id="GO:0005737">
    <property type="term" value="C:cytoplasm"/>
    <property type="evidence" value="ECO:0007669"/>
    <property type="project" value="UniProtKB-KW"/>
</dbReference>
<dbReference type="GO" id="GO:0000776">
    <property type="term" value="C:kinetochore"/>
    <property type="evidence" value="ECO:0007669"/>
    <property type="project" value="UniProtKB-KW"/>
</dbReference>
<dbReference type="GO" id="GO:0005874">
    <property type="term" value="C:microtubule"/>
    <property type="evidence" value="ECO:0007669"/>
    <property type="project" value="UniProtKB-KW"/>
</dbReference>
<dbReference type="GO" id="GO:0005634">
    <property type="term" value="C:nucleus"/>
    <property type="evidence" value="ECO:0007669"/>
    <property type="project" value="UniProtKB-SubCell"/>
</dbReference>
<dbReference type="GO" id="GO:0005819">
    <property type="term" value="C:spindle"/>
    <property type="evidence" value="ECO:0007669"/>
    <property type="project" value="UniProtKB-SubCell"/>
</dbReference>
<dbReference type="GO" id="GO:1990047">
    <property type="term" value="C:spindle matrix"/>
    <property type="evidence" value="ECO:0000250"/>
    <property type="project" value="UniProtKB"/>
</dbReference>
<dbReference type="GO" id="GO:0003677">
    <property type="term" value="F:DNA binding"/>
    <property type="evidence" value="ECO:0007669"/>
    <property type="project" value="UniProtKB-KW"/>
</dbReference>
<dbReference type="GO" id="GO:0008017">
    <property type="term" value="F:microtubule binding"/>
    <property type="evidence" value="ECO:0000250"/>
    <property type="project" value="UniProtKB"/>
</dbReference>
<dbReference type="GO" id="GO:0008270">
    <property type="term" value="F:zinc ion binding"/>
    <property type="evidence" value="ECO:0007669"/>
    <property type="project" value="UniProtKB-KW"/>
</dbReference>
<dbReference type="GO" id="GO:0008608">
    <property type="term" value="P:attachment of spindle microtubules to kinetochore"/>
    <property type="evidence" value="ECO:0007669"/>
    <property type="project" value="TreeGrafter"/>
</dbReference>
<dbReference type="GO" id="GO:0051301">
    <property type="term" value="P:cell division"/>
    <property type="evidence" value="ECO:0007669"/>
    <property type="project" value="UniProtKB-KW"/>
</dbReference>
<dbReference type="GO" id="GO:0001578">
    <property type="term" value="P:microtubule bundle formation"/>
    <property type="evidence" value="ECO:0000250"/>
    <property type="project" value="UniProtKB"/>
</dbReference>
<dbReference type="GO" id="GO:0046785">
    <property type="term" value="P:microtubule polymerization"/>
    <property type="evidence" value="ECO:0000250"/>
    <property type="project" value="UniProtKB"/>
</dbReference>
<dbReference type="GO" id="GO:0090307">
    <property type="term" value="P:mitotic spindle assembly"/>
    <property type="evidence" value="ECO:0000250"/>
    <property type="project" value="UniProtKB"/>
</dbReference>
<dbReference type="GO" id="GO:0007094">
    <property type="term" value="P:mitotic spindle assembly checkpoint signaling"/>
    <property type="evidence" value="ECO:0007669"/>
    <property type="project" value="TreeGrafter"/>
</dbReference>
<dbReference type="CDD" id="cd20908">
    <property type="entry name" value="SUF4-like"/>
    <property type="match status" value="1"/>
</dbReference>
<dbReference type="InterPro" id="IPR013087">
    <property type="entry name" value="Znf_C2H2_type"/>
</dbReference>
<dbReference type="PANTHER" id="PTHR23215:SF0">
    <property type="entry name" value="BUB3-INTERACTING AND GLEBS MOTIF-CONTAINING PROTEIN ZNF207"/>
    <property type="match status" value="1"/>
</dbReference>
<dbReference type="PANTHER" id="PTHR23215">
    <property type="entry name" value="ZINC FINGER PROTEIN 207"/>
    <property type="match status" value="1"/>
</dbReference>
<dbReference type="PRINTS" id="PR01217">
    <property type="entry name" value="PRICHEXTENSN"/>
</dbReference>
<dbReference type="SMART" id="SM00355">
    <property type="entry name" value="ZnF_C2H2"/>
    <property type="match status" value="2"/>
</dbReference>
<dbReference type="PROSITE" id="PS00028">
    <property type="entry name" value="ZINC_FINGER_C2H2_1"/>
    <property type="match status" value="2"/>
</dbReference>
<evidence type="ECO:0000250" key="1">
    <source>
        <dbReference type="UniProtKB" id="O43670"/>
    </source>
</evidence>
<evidence type="ECO:0000250" key="2">
    <source>
        <dbReference type="UniProtKB" id="Q9JMD0"/>
    </source>
</evidence>
<evidence type="ECO:0000256" key="3">
    <source>
        <dbReference type="SAM" id="MobiDB-lite"/>
    </source>
</evidence>
<proteinExistence type="evidence at transcript level"/>
<accession>Q5R8K4</accession>
<comment type="function">
    <text evidence="1">Kinetochore- and microtubule-binding protein that plays a key role in spindle assembly. ZNF207/BuGZ is mainly composed of disordered low-complexity regions and undergoes phase transition or coacervation to form temperature-dependent liquid droplets. Coacervation promotes microtubule bundling and concentrates tubulin, promoting microtubule polymerization and assembly of spindle and spindle matrix by concentrating its building blocks. Also acts as a regulator of mitotic chromosome alignment by mediating the stability and kinetochore loading of BUB3. Mechanisms by which BUB3 is protected are unclear: according to a first report, ZNF207/BuGZ may act by blocking ubiquitination and proteasomal degradation of BUB3. According to another report, the stabilization is independent of the proteasome.</text>
</comment>
<comment type="subunit">
    <text evidence="1">Interacts (via GLEBS region) with BUB3.</text>
</comment>
<comment type="subcellular location">
    <subcellularLocation>
        <location evidence="1">Nucleus</location>
    </subcellularLocation>
    <subcellularLocation>
        <location evidence="1">Chromosome</location>
        <location evidence="1">Centromere</location>
        <location evidence="1">Kinetochore</location>
    </subcellularLocation>
    <subcellularLocation>
        <location evidence="1">Cytoplasm</location>
        <location evidence="1">Cytoskeleton</location>
        <location evidence="1">Spindle</location>
    </subcellularLocation>
    <text evidence="1">Localizes primarily to the nucleus in interphase, concentrates at kinetochores prior to nuclear envelope breakdown and during early prometaphase, and disappears from kinetochores upon microtubule-binding.</text>
</comment>
<comment type="domain">
    <text evidence="1">The GLEBS region mediates interaction with BUB3.</text>
</comment>
<comment type="domain">
    <text evidence="1">The microtubule-binding region is required for efficient loading of BUB3 onto kinetochores and proper mitosis.</text>
</comment>
<comment type="domain">
    <text evidence="2">Mainly composed of disordered low-complexity regions outside of the C2H2-type zinc fingers. Coacervation depends on hydrophobic and aromatic Phe and Tyr in the disordered low-complexity region, that may promote coacervation by forming intermolecular hydrophobic interactions.</text>
</comment>